<accession>Q0VM64</accession>
<reference key="1">
    <citation type="journal article" date="2006" name="Nat. Biotechnol.">
        <title>Genome sequence of the ubiquitous hydrocarbon-degrading marine bacterium Alcanivorax borkumensis.</title>
        <authorList>
            <person name="Schneiker S."/>
            <person name="Martins dos Santos V.A.P."/>
            <person name="Bartels D."/>
            <person name="Bekel T."/>
            <person name="Brecht M."/>
            <person name="Buhrmester J."/>
            <person name="Chernikova T.N."/>
            <person name="Denaro R."/>
            <person name="Ferrer M."/>
            <person name="Gertler C."/>
            <person name="Goesmann A."/>
            <person name="Golyshina O.V."/>
            <person name="Kaminski F."/>
            <person name="Khachane A.N."/>
            <person name="Lang S."/>
            <person name="Linke B."/>
            <person name="McHardy A.C."/>
            <person name="Meyer F."/>
            <person name="Nechitaylo T."/>
            <person name="Puehler A."/>
            <person name="Regenhardt D."/>
            <person name="Rupp O."/>
            <person name="Sabirova J.S."/>
            <person name="Selbitschka W."/>
            <person name="Yakimov M.M."/>
            <person name="Timmis K.N."/>
            <person name="Vorhoelter F.-J."/>
            <person name="Weidner S."/>
            <person name="Kaiser O."/>
            <person name="Golyshin P.N."/>
        </authorList>
    </citation>
    <scope>NUCLEOTIDE SEQUENCE [LARGE SCALE GENOMIC DNA]</scope>
    <source>
        <strain>ATCC 700651 / DSM 11573 / NCIMB 13689 / SK2</strain>
    </source>
</reference>
<protein>
    <recommendedName>
        <fullName evidence="1">Probable Fe(2+)-trafficking protein</fullName>
    </recommendedName>
</protein>
<sequence>MSRTVFCRKYQSDMEGLPRPPFPGPKGQDIFDHVSQQAWKEWLHEQTMLINEKHLNVMDPEAKRFLDEQRDRFLNNENYEKAEGYVPPAHDANK</sequence>
<evidence type="ECO:0000255" key="1">
    <source>
        <dbReference type="HAMAP-Rule" id="MF_00686"/>
    </source>
</evidence>
<proteinExistence type="inferred from homology"/>
<gene>
    <name type="ordered locus">ABO_2286</name>
</gene>
<comment type="function">
    <text evidence="1">Could be a mediator in iron transactions between iron acquisition and iron-requiring processes, such as synthesis and/or repair of Fe-S clusters in biosynthetic enzymes.</text>
</comment>
<comment type="similarity">
    <text evidence="1">Belongs to the Fe(2+)-trafficking protein family.</text>
</comment>
<dbReference type="EMBL" id="AM286690">
    <property type="protein sequence ID" value="CAL17734.1"/>
    <property type="molecule type" value="Genomic_DNA"/>
</dbReference>
<dbReference type="RefSeq" id="WP_011589561.1">
    <property type="nucleotide sequence ID" value="NC_008260.1"/>
</dbReference>
<dbReference type="SMR" id="Q0VM64"/>
<dbReference type="STRING" id="393595.ABO_2286"/>
<dbReference type="KEGG" id="abo:ABO_2286"/>
<dbReference type="eggNOG" id="COG2924">
    <property type="taxonomic scope" value="Bacteria"/>
</dbReference>
<dbReference type="HOGENOM" id="CLU_170994_0_0_6"/>
<dbReference type="OrthoDB" id="9804318at2"/>
<dbReference type="Proteomes" id="UP000008871">
    <property type="component" value="Chromosome"/>
</dbReference>
<dbReference type="GO" id="GO:0005829">
    <property type="term" value="C:cytosol"/>
    <property type="evidence" value="ECO:0007669"/>
    <property type="project" value="TreeGrafter"/>
</dbReference>
<dbReference type="GO" id="GO:0005506">
    <property type="term" value="F:iron ion binding"/>
    <property type="evidence" value="ECO:0007669"/>
    <property type="project" value="UniProtKB-UniRule"/>
</dbReference>
<dbReference type="GO" id="GO:0034599">
    <property type="term" value="P:cellular response to oxidative stress"/>
    <property type="evidence" value="ECO:0007669"/>
    <property type="project" value="TreeGrafter"/>
</dbReference>
<dbReference type="FunFam" id="1.10.3880.10:FF:000001">
    <property type="entry name" value="Probable Fe(2+)-trafficking protein"/>
    <property type="match status" value="1"/>
</dbReference>
<dbReference type="Gene3D" id="1.10.3880.10">
    <property type="entry name" value="Fe(II) trafficking protein YggX"/>
    <property type="match status" value="1"/>
</dbReference>
<dbReference type="HAMAP" id="MF_00686">
    <property type="entry name" value="Fe_traffic_YggX"/>
    <property type="match status" value="1"/>
</dbReference>
<dbReference type="InterPro" id="IPR007457">
    <property type="entry name" value="Fe_traffick_prot_YggX"/>
</dbReference>
<dbReference type="InterPro" id="IPR036766">
    <property type="entry name" value="Fe_traffick_prot_YggX_sf"/>
</dbReference>
<dbReference type="NCBIfam" id="NF003817">
    <property type="entry name" value="PRK05408.1"/>
    <property type="match status" value="1"/>
</dbReference>
<dbReference type="PANTHER" id="PTHR36965">
    <property type="entry name" value="FE(2+)-TRAFFICKING PROTEIN-RELATED"/>
    <property type="match status" value="1"/>
</dbReference>
<dbReference type="PANTHER" id="PTHR36965:SF1">
    <property type="entry name" value="FE(2+)-TRAFFICKING PROTEIN-RELATED"/>
    <property type="match status" value="1"/>
</dbReference>
<dbReference type="Pfam" id="PF04362">
    <property type="entry name" value="Iron_traffic"/>
    <property type="match status" value="1"/>
</dbReference>
<dbReference type="PIRSF" id="PIRSF029827">
    <property type="entry name" value="Fe_traffic_YggX"/>
    <property type="match status" value="1"/>
</dbReference>
<dbReference type="SUPFAM" id="SSF111148">
    <property type="entry name" value="YggX-like"/>
    <property type="match status" value="1"/>
</dbReference>
<feature type="chain" id="PRO_1000045014" description="Probable Fe(2+)-trafficking protein">
    <location>
        <begin position="1"/>
        <end position="94"/>
    </location>
</feature>
<name>FETP_ALCBS</name>
<organism>
    <name type="scientific">Alcanivorax borkumensis (strain ATCC 700651 / DSM 11573 / NCIMB 13689 / SK2)</name>
    <dbReference type="NCBI Taxonomy" id="393595"/>
    <lineage>
        <taxon>Bacteria</taxon>
        <taxon>Pseudomonadati</taxon>
        <taxon>Pseudomonadota</taxon>
        <taxon>Gammaproteobacteria</taxon>
        <taxon>Oceanospirillales</taxon>
        <taxon>Alcanivoracaceae</taxon>
        <taxon>Alcanivorax</taxon>
    </lineage>
</organism>
<keyword id="KW-0408">Iron</keyword>
<keyword id="KW-1185">Reference proteome</keyword>